<gene>
    <name evidence="1" type="primary">accA</name>
    <name type="ordered locus">Rleg2_3599</name>
</gene>
<feature type="chain" id="PRO_1000134511" description="Acetyl-coenzyme A carboxylase carboxyl transferase subunit alpha">
    <location>
        <begin position="1"/>
        <end position="317"/>
    </location>
</feature>
<feature type="domain" description="CoA carboxyltransferase C-terminal" evidence="2">
    <location>
        <begin position="40"/>
        <end position="293"/>
    </location>
</feature>
<dbReference type="EC" id="2.1.3.15" evidence="1"/>
<dbReference type="EMBL" id="CP001191">
    <property type="protein sequence ID" value="ACI56866.1"/>
    <property type="molecule type" value="Genomic_DNA"/>
</dbReference>
<dbReference type="RefSeq" id="WP_003589922.1">
    <property type="nucleotide sequence ID" value="NC_011369.1"/>
</dbReference>
<dbReference type="SMR" id="B5ZSI8"/>
<dbReference type="STRING" id="395492.Rleg2_3599"/>
<dbReference type="KEGG" id="rlt:Rleg2_3599"/>
<dbReference type="eggNOG" id="COG0825">
    <property type="taxonomic scope" value="Bacteria"/>
</dbReference>
<dbReference type="HOGENOM" id="CLU_015486_0_2_5"/>
<dbReference type="UniPathway" id="UPA00655">
    <property type="reaction ID" value="UER00711"/>
</dbReference>
<dbReference type="Proteomes" id="UP000008330">
    <property type="component" value="Chromosome"/>
</dbReference>
<dbReference type="GO" id="GO:0009317">
    <property type="term" value="C:acetyl-CoA carboxylase complex"/>
    <property type="evidence" value="ECO:0007669"/>
    <property type="project" value="InterPro"/>
</dbReference>
<dbReference type="GO" id="GO:0003989">
    <property type="term" value="F:acetyl-CoA carboxylase activity"/>
    <property type="evidence" value="ECO:0007669"/>
    <property type="project" value="InterPro"/>
</dbReference>
<dbReference type="GO" id="GO:0005524">
    <property type="term" value="F:ATP binding"/>
    <property type="evidence" value="ECO:0007669"/>
    <property type="project" value="UniProtKB-KW"/>
</dbReference>
<dbReference type="GO" id="GO:0016743">
    <property type="term" value="F:carboxyl- or carbamoyltransferase activity"/>
    <property type="evidence" value="ECO:0007669"/>
    <property type="project" value="UniProtKB-UniRule"/>
</dbReference>
<dbReference type="GO" id="GO:0006633">
    <property type="term" value="P:fatty acid biosynthetic process"/>
    <property type="evidence" value="ECO:0007669"/>
    <property type="project" value="UniProtKB-KW"/>
</dbReference>
<dbReference type="GO" id="GO:2001295">
    <property type="term" value="P:malonyl-CoA biosynthetic process"/>
    <property type="evidence" value="ECO:0007669"/>
    <property type="project" value="UniProtKB-UniRule"/>
</dbReference>
<dbReference type="Gene3D" id="3.90.226.10">
    <property type="entry name" value="2-enoyl-CoA Hydratase, Chain A, domain 1"/>
    <property type="match status" value="1"/>
</dbReference>
<dbReference type="HAMAP" id="MF_00823">
    <property type="entry name" value="AcetylCoA_CT_alpha"/>
    <property type="match status" value="1"/>
</dbReference>
<dbReference type="InterPro" id="IPR001095">
    <property type="entry name" value="Acetyl_CoA_COase_a_su"/>
</dbReference>
<dbReference type="InterPro" id="IPR029045">
    <property type="entry name" value="ClpP/crotonase-like_dom_sf"/>
</dbReference>
<dbReference type="InterPro" id="IPR011763">
    <property type="entry name" value="COA_CT_C"/>
</dbReference>
<dbReference type="NCBIfam" id="TIGR00513">
    <property type="entry name" value="accA"/>
    <property type="match status" value="1"/>
</dbReference>
<dbReference type="NCBIfam" id="NF041504">
    <property type="entry name" value="AccA_sub"/>
    <property type="match status" value="1"/>
</dbReference>
<dbReference type="NCBIfam" id="NF004344">
    <property type="entry name" value="PRK05724.1"/>
    <property type="match status" value="1"/>
</dbReference>
<dbReference type="PANTHER" id="PTHR42853">
    <property type="entry name" value="ACETYL-COENZYME A CARBOXYLASE CARBOXYL TRANSFERASE SUBUNIT ALPHA"/>
    <property type="match status" value="1"/>
</dbReference>
<dbReference type="PANTHER" id="PTHR42853:SF3">
    <property type="entry name" value="ACETYL-COENZYME A CARBOXYLASE CARBOXYL TRANSFERASE SUBUNIT ALPHA, CHLOROPLASTIC"/>
    <property type="match status" value="1"/>
</dbReference>
<dbReference type="Pfam" id="PF03255">
    <property type="entry name" value="ACCA"/>
    <property type="match status" value="1"/>
</dbReference>
<dbReference type="PRINTS" id="PR01069">
    <property type="entry name" value="ACCCTRFRASEA"/>
</dbReference>
<dbReference type="SUPFAM" id="SSF52096">
    <property type="entry name" value="ClpP/crotonase"/>
    <property type="match status" value="1"/>
</dbReference>
<dbReference type="PROSITE" id="PS50989">
    <property type="entry name" value="COA_CT_CTER"/>
    <property type="match status" value="1"/>
</dbReference>
<sequence length="317" mass="34595">MHNYLDFEKPISDLEGKIIELKKLATEDESIDTTDEIGRLEVRVREAIVEIYSKLNPWQKTQVARHPQRPHFVDYAKTLFQEFTPLAGDRKFSEDAAIQAGLARFRGQPVAVVGQEKGNDTKTRLKHNFGSPRPEGYRKAIRILEMADRFGLPVISLVDTAGAYPGVGAEERGQAEAIARSTEMCLGVKVPLVSVVIGEGGSGGAIAIATGNKVYMLEHSIYSVISPEGAASILWRDSTRAREAATNMKITAEDLKSLGVIDGIISEPLGGAHRDPDSVIAATGDVIANALGEMASRSGEQLRNERRQKFLNMGRNL</sequence>
<reference key="1">
    <citation type="journal article" date="2010" name="Stand. Genomic Sci.">
        <title>Complete genome sequence of Rhizobium leguminosarum bv trifolii strain WSM2304, an effective microsymbiont of the South American clover Trifolium polymorphum.</title>
        <authorList>
            <person name="Reeve W."/>
            <person name="O'Hara G."/>
            <person name="Chain P."/>
            <person name="Ardley J."/>
            <person name="Brau L."/>
            <person name="Nandesena K."/>
            <person name="Tiwari R."/>
            <person name="Malfatti S."/>
            <person name="Kiss H."/>
            <person name="Lapidus A."/>
            <person name="Copeland A."/>
            <person name="Nolan M."/>
            <person name="Land M."/>
            <person name="Ivanova N."/>
            <person name="Mavromatis K."/>
            <person name="Markowitz V."/>
            <person name="Kyrpides N."/>
            <person name="Melino V."/>
            <person name="Denton M."/>
            <person name="Yates R."/>
            <person name="Howieson J."/>
        </authorList>
    </citation>
    <scope>NUCLEOTIDE SEQUENCE [LARGE SCALE GENOMIC DNA]</scope>
    <source>
        <strain>WSM2304</strain>
    </source>
</reference>
<name>ACCA_RHILW</name>
<comment type="function">
    <text evidence="1">Component of the acetyl coenzyme A carboxylase (ACC) complex. First, biotin carboxylase catalyzes the carboxylation of biotin on its carrier protein (BCCP) and then the CO(2) group is transferred by the carboxyltransferase to acetyl-CoA to form malonyl-CoA.</text>
</comment>
<comment type="catalytic activity">
    <reaction evidence="1">
        <text>N(6)-carboxybiotinyl-L-lysyl-[protein] + acetyl-CoA = N(6)-biotinyl-L-lysyl-[protein] + malonyl-CoA</text>
        <dbReference type="Rhea" id="RHEA:54728"/>
        <dbReference type="Rhea" id="RHEA-COMP:10505"/>
        <dbReference type="Rhea" id="RHEA-COMP:10506"/>
        <dbReference type="ChEBI" id="CHEBI:57288"/>
        <dbReference type="ChEBI" id="CHEBI:57384"/>
        <dbReference type="ChEBI" id="CHEBI:83144"/>
        <dbReference type="ChEBI" id="CHEBI:83145"/>
        <dbReference type="EC" id="2.1.3.15"/>
    </reaction>
</comment>
<comment type="pathway">
    <text evidence="1">Lipid metabolism; malonyl-CoA biosynthesis; malonyl-CoA from acetyl-CoA: step 1/1.</text>
</comment>
<comment type="subunit">
    <text evidence="1">Acetyl-CoA carboxylase is a heterohexamer composed of biotin carboxyl carrier protein (AccB), biotin carboxylase (AccC) and two subunits each of ACCase subunit alpha (AccA) and ACCase subunit beta (AccD).</text>
</comment>
<comment type="subcellular location">
    <subcellularLocation>
        <location evidence="1">Cytoplasm</location>
    </subcellularLocation>
</comment>
<comment type="similarity">
    <text evidence="1">Belongs to the AccA family.</text>
</comment>
<protein>
    <recommendedName>
        <fullName evidence="1">Acetyl-coenzyme A carboxylase carboxyl transferase subunit alpha</fullName>
        <shortName evidence="1">ACCase subunit alpha</shortName>
        <shortName evidence="1">Acetyl-CoA carboxylase carboxyltransferase subunit alpha</shortName>
        <ecNumber evidence="1">2.1.3.15</ecNumber>
    </recommendedName>
</protein>
<evidence type="ECO:0000255" key="1">
    <source>
        <dbReference type="HAMAP-Rule" id="MF_00823"/>
    </source>
</evidence>
<evidence type="ECO:0000255" key="2">
    <source>
        <dbReference type="PROSITE-ProRule" id="PRU01137"/>
    </source>
</evidence>
<keyword id="KW-0067">ATP-binding</keyword>
<keyword id="KW-0963">Cytoplasm</keyword>
<keyword id="KW-0275">Fatty acid biosynthesis</keyword>
<keyword id="KW-0276">Fatty acid metabolism</keyword>
<keyword id="KW-0444">Lipid biosynthesis</keyword>
<keyword id="KW-0443">Lipid metabolism</keyword>
<keyword id="KW-0547">Nucleotide-binding</keyword>
<keyword id="KW-1185">Reference proteome</keyword>
<keyword id="KW-0808">Transferase</keyword>
<organism>
    <name type="scientific">Rhizobium leguminosarum bv. trifolii (strain WSM2304)</name>
    <dbReference type="NCBI Taxonomy" id="395492"/>
    <lineage>
        <taxon>Bacteria</taxon>
        <taxon>Pseudomonadati</taxon>
        <taxon>Pseudomonadota</taxon>
        <taxon>Alphaproteobacteria</taxon>
        <taxon>Hyphomicrobiales</taxon>
        <taxon>Rhizobiaceae</taxon>
        <taxon>Rhizobium/Agrobacterium group</taxon>
        <taxon>Rhizobium</taxon>
    </lineage>
</organism>
<proteinExistence type="inferred from homology"/>
<accession>B5ZSI8</accession>